<name>RL20_CHLAB</name>
<dbReference type="EMBL" id="CR848038">
    <property type="protein sequence ID" value="CAH64184.1"/>
    <property type="molecule type" value="Genomic_DNA"/>
</dbReference>
<dbReference type="SMR" id="Q5L5A7"/>
<dbReference type="KEGG" id="cab:CAB737"/>
<dbReference type="eggNOG" id="COG0292">
    <property type="taxonomic scope" value="Bacteria"/>
</dbReference>
<dbReference type="HOGENOM" id="CLU_123265_0_1_0"/>
<dbReference type="Proteomes" id="UP000001012">
    <property type="component" value="Chromosome"/>
</dbReference>
<dbReference type="GO" id="GO:1990904">
    <property type="term" value="C:ribonucleoprotein complex"/>
    <property type="evidence" value="ECO:0007669"/>
    <property type="project" value="UniProtKB-KW"/>
</dbReference>
<dbReference type="GO" id="GO:0005840">
    <property type="term" value="C:ribosome"/>
    <property type="evidence" value="ECO:0007669"/>
    <property type="project" value="UniProtKB-KW"/>
</dbReference>
<dbReference type="GO" id="GO:0019843">
    <property type="term" value="F:rRNA binding"/>
    <property type="evidence" value="ECO:0007669"/>
    <property type="project" value="UniProtKB-UniRule"/>
</dbReference>
<dbReference type="GO" id="GO:0003735">
    <property type="term" value="F:structural constituent of ribosome"/>
    <property type="evidence" value="ECO:0007669"/>
    <property type="project" value="InterPro"/>
</dbReference>
<dbReference type="GO" id="GO:0000027">
    <property type="term" value="P:ribosomal large subunit assembly"/>
    <property type="evidence" value="ECO:0007669"/>
    <property type="project" value="UniProtKB-UniRule"/>
</dbReference>
<dbReference type="GO" id="GO:0006412">
    <property type="term" value="P:translation"/>
    <property type="evidence" value="ECO:0007669"/>
    <property type="project" value="InterPro"/>
</dbReference>
<dbReference type="CDD" id="cd07026">
    <property type="entry name" value="Ribosomal_L20"/>
    <property type="match status" value="1"/>
</dbReference>
<dbReference type="FunFam" id="1.10.1900.20:FF:000001">
    <property type="entry name" value="50S ribosomal protein L20"/>
    <property type="match status" value="1"/>
</dbReference>
<dbReference type="Gene3D" id="6.10.160.10">
    <property type="match status" value="1"/>
</dbReference>
<dbReference type="Gene3D" id="1.10.1900.20">
    <property type="entry name" value="Ribosomal protein L20"/>
    <property type="match status" value="1"/>
</dbReference>
<dbReference type="HAMAP" id="MF_00382">
    <property type="entry name" value="Ribosomal_bL20"/>
    <property type="match status" value="1"/>
</dbReference>
<dbReference type="InterPro" id="IPR005813">
    <property type="entry name" value="Ribosomal_bL20"/>
</dbReference>
<dbReference type="InterPro" id="IPR049946">
    <property type="entry name" value="RIBOSOMAL_L20_CS"/>
</dbReference>
<dbReference type="InterPro" id="IPR035566">
    <property type="entry name" value="Ribosomal_protein_bL20_C"/>
</dbReference>
<dbReference type="NCBIfam" id="TIGR01032">
    <property type="entry name" value="rplT_bact"/>
    <property type="match status" value="1"/>
</dbReference>
<dbReference type="PANTHER" id="PTHR10986">
    <property type="entry name" value="39S RIBOSOMAL PROTEIN L20"/>
    <property type="match status" value="1"/>
</dbReference>
<dbReference type="Pfam" id="PF00453">
    <property type="entry name" value="Ribosomal_L20"/>
    <property type="match status" value="1"/>
</dbReference>
<dbReference type="PRINTS" id="PR00062">
    <property type="entry name" value="RIBOSOMALL20"/>
</dbReference>
<dbReference type="SUPFAM" id="SSF74731">
    <property type="entry name" value="Ribosomal protein L20"/>
    <property type="match status" value="1"/>
</dbReference>
<dbReference type="PROSITE" id="PS00937">
    <property type="entry name" value="RIBOSOMAL_L20"/>
    <property type="match status" value="1"/>
</dbReference>
<feature type="chain" id="PRO_0000243669" description="Large ribosomal subunit protein bL20">
    <location>
        <begin position="1"/>
        <end position="120"/>
    </location>
</feature>
<evidence type="ECO:0000255" key="1">
    <source>
        <dbReference type="HAMAP-Rule" id="MF_00382"/>
    </source>
</evidence>
<evidence type="ECO:0000305" key="2"/>
<accession>Q5L5A7</accession>
<reference key="1">
    <citation type="journal article" date="2005" name="Genome Res.">
        <title>The Chlamydophila abortus genome sequence reveals an array of variable proteins that contribute to interspecies variation.</title>
        <authorList>
            <person name="Thomson N.R."/>
            <person name="Yeats C."/>
            <person name="Bell K."/>
            <person name="Holden M.T.G."/>
            <person name="Bentley S.D."/>
            <person name="Livingstone M."/>
            <person name="Cerdeno-Tarraga A.-M."/>
            <person name="Harris B."/>
            <person name="Doggett J."/>
            <person name="Ormond D."/>
            <person name="Mungall K."/>
            <person name="Clarke K."/>
            <person name="Feltwell T."/>
            <person name="Hance Z."/>
            <person name="Sanders M."/>
            <person name="Quail M.A."/>
            <person name="Price C."/>
            <person name="Barrell B.G."/>
            <person name="Parkhill J."/>
            <person name="Longbottom D."/>
        </authorList>
    </citation>
    <scope>NUCLEOTIDE SEQUENCE [LARGE SCALE GENOMIC DNA]</scope>
    <source>
        <strain>DSM 27085 / S26/3</strain>
    </source>
</reference>
<comment type="function">
    <text evidence="1">Binds directly to 23S ribosomal RNA and is necessary for the in vitro assembly process of the 50S ribosomal subunit. It is not involved in the protein synthesizing functions of that subunit.</text>
</comment>
<comment type="similarity">
    <text evidence="1">Belongs to the bacterial ribosomal protein bL20 family.</text>
</comment>
<organism>
    <name type="scientific">Chlamydia abortus (strain DSM 27085 / S26/3)</name>
    <name type="common">Chlamydophila abortus</name>
    <dbReference type="NCBI Taxonomy" id="218497"/>
    <lineage>
        <taxon>Bacteria</taxon>
        <taxon>Pseudomonadati</taxon>
        <taxon>Chlamydiota</taxon>
        <taxon>Chlamydiia</taxon>
        <taxon>Chlamydiales</taxon>
        <taxon>Chlamydiaceae</taxon>
        <taxon>Chlamydia/Chlamydophila group</taxon>
        <taxon>Chlamydia</taxon>
    </lineage>
</organism>
<keyword id="KW-0687">Ribonucleoprotein</keyword>
<keyword id="KW-0689">Ribosomal protein</keyword>
<keyword id="KW-0694">RNA-binding</keyword>
<keyword id="KW-0699">rRNA-binding</keyword>
<gene>
    <name evidence="1" type="primary">rplT</name>
    <name type="ordered locus">CAB737</name>
</gene>
<sequence length="120" mass="13669">MRATGSVASRCRRKRILKQAKGFWGDRKGHFRQSRSSVMRAMAFNYMHRKDRKGDFRSLWIARLNVASRINGLSYSRLINGLKCAGIDLNRKMLSEMAIHNPTGFAEVANQAKKALEANL</sequence>
<protein>
    <recommendedName>
        <fullName evidence="1">Large ribosomal subunit protein bL20</fullName>
    </recommendedName>
    <alternativeName>
        <fullName evidence="2">50S ribosomal protein L20</fullName>
    </alternativeName>
</protein>
<proteinExistence type="inferred from homology"/>